<evidence type="ECO:0000255" key="1">
    <source>
        <dbReference type="HAMAP-Rule" id="MF_00531"/>
    </source>
</evidence>
<evidence type="ECO:0000305" key="2"/>
<sequence>MPRSLKKGPFVDHHLLKKVFEAQESNSKKPIKTWSRRSMIVPDMIGLTIAVHNGQQHVPVLMTEEMVGHKLGEFVVTRNYRGHAADKKAKKK</sequence>
<keyword id="KW-0687">Ribonucleoprotein</keyword>
<keyword id="KW-0689">Ribosomal protein</keyword>
<keyword id="KW-0694">RNA-binding</keyword>
<keyword id="KW-0699">rRNA-binding</keyword>
<organism>
    <name type="scientific">Francisella tularensis subsp. tularensis (strain FSC 198)</name>
    <dbReference type="NCBI Taxonomy" id="393115"/>
    <lineage>
        <taxon>Bacteria</taxon>
        <taxon>Pseudomonadati</taxon>
        <taxon>Pseudomonadota</taxon>
        <taxon>Gammaproteobacteria</taxon>
        <taxon>Thiotrichales</taxon>
        <taxon>Francisellaceae</taxon>
        <taxon>Francisella</taxon>
    </lineage>
</organism>
<accession>Q14JB6</accession>
<protein>
    <recommendedName>
        <fullName evidence="1">Small ribosomal subunit protein uS19</fullName>
    </recommendedName>
    <alternativeName>
        <fullName evidence="2">30S ribosomal protein S19</fullName>
    </alternativeName>
</protein>
<comment type="function">
    <text evidence="1">Protein S19 forms a complex with S13 that binds strongly to the 16S ribosomal RNA.</text>
</comment>
<comment type="similarity">
    <text evidence="1">Belongs to the universal ribosomal protein uS19 family.</text>
</comment>
<proteinExistence type="inferred from homology"/>
<gene>
    <name evidence="1" type="primary">rpsS</name>
    <name type="ordered locus">FTF0329</name>
</gene>
<dbReference type="EMBL" id="AM286280">
    <property type="protein sequence ID" value="CAL08345.1"/>
    <property type="molecule type" value="Genomic_DNA"/>
</dbReference>
<dbReference type="RefSeq" id="WP_003027195.1">
    <property type="nucleotide sequence ID" value="NC_008245.1"/>
</dbReference>
<dbReference type="SMR" id="Q14JB6"/>
<dbReference type="GeneID" id="75264257"/>
<dbReference type="KEGG" id="ftf:FTF0329"/>
<dbReference type="HOGENOM" id="CLU_144911_0_1_6"/>
<dbReference type="GO" id="GO:0005737">
    <property type="term" value="C:cytoplasm"/>
    <property type="evidence" value="ECO:0007669"/>
    <property type="project" value="UniProtKB-ARBA"/>
</dbReference>
<dbReference type="GO" id="GO:0015935">
    <property type="term" value="C:small ribosomal subunit"/>
    <property type="evidence" value="ECO:0007669"/>
    <property type="project" value="InterPro"/>
</dbReference>
<dbReference type="GO" id="GO:0019843">
    <property type="term" value="F:rRNA binding"/>
    <property type="evidence" value="ECO:0007669"/>
    <property type="project" value="UniProtKB-UniRule"/>
</dbReference>
<dbReference type="GO" id="GO:0003735">
    <property type="term" value="F:structural constituent of ribosome"/>
    <property type="evidence" value="ECO:0007669"/>
    <property type="project" value="InterPro"/>
</dbReference>
<dbReference type="GO" id="GO:0000028">
    <property type="term" value="P:ribosomal small subunit assembly"/>
    <property type="evidence" value="ECO:0007669"/>
    <property type="project" value="TreeGrafter"/>
</dbReference>
<dbReference type="GO" id="GO:0006412">
    <property type="term" value="P:translation"/>
    <property type="evidence" value="ECO:0007669"/>
    <property type="project" value="UniProtKB-UniRule"/>
</dbReference>
<dbReference type="FunFam" id="3.30.860.10:FF:000001">
    <property type="entry name" value="30S ribosomal protein S19"/>
    <property type="match status" value="1"/>
</dbReference>
<dbReference type="Gene3D" id="3.30.860.10">
    <property type="entry name" value="30s Ribosomal Protein S19, Chain A"/>
    <property type="match status" value="1"/>
</dbReference>
<dbReference type="HAMAP" id="MF_00531">
    <property type="entry name" value="Ribosomal_uS19"/>
    <property type="match status" value="1"/>
</dbReference>
<dbReference type="InterPro" id="IPR002222">
    <property type="entry name" value="Ribosomal_uS19"/>
</dbReference>
<dbReference type="InterPro" id="IPR005732">
    <property type="entry name" value="Ribosomal_uS19_bac-type"/>
</dbReference>
<dbReference type="InterPro" id="IPR020934">
    <property type="entry name" value="Ribosomal_uS19_CS"/>
</dbReference>
<dbReference type="InterPro" id="IPR023575">
    <property type="entry name" value="Ribosomal_uS19_SF"/>
</dbReference>
<dbReference type="NCBIfam" id="TIGR01050">
    <property type="entry name" value="rpsS_bact"/>
    <property type="match status" value="1"/>
</dbReference>
<dbReference type="PANTHER" id="PTHR11880">
    <property type="entry name" value="RIBOSOMAL PROTEIN S19P FAMILY MEMBER"/>
    <property type="match status" value="1"/>
</dbReference>
<dbReference type="PANTHER" id="PTHR11880:SF8">
    <property type="entry name" value="SMALL RIBOSOMAL SUBUNIT PROTEIN US19M"/>
    <property type="match status" value="1"/>
</dbReference>
<dbReference type="Pfam" id="PF00203">
    <property type="entry name" value="Ribosomal_S19"/>
    <property type="match status" value="1"/>
</dbReference>
<dbReference type="PIRSF" id="PIRSF002144">
    <property type="entry name" value="Ribosomal_S19"/>
    <property type="match status" value="1"/>
</dbReference>
<dbReference type="PRINTS" id="PR00975">
    <property type="entry name" value="RIBOSOMALS19"/>
</dbReference>
<dbReference type="SUPFAM" id="SSF54570">
    <property type="entry name" value="Ribosomal protein S19"/>
    <property type="match status" value="1"/>
</dbReference>
<dbReference type="PROSITE" id="PS00323">
    <property type="entry name" value="RIBOSOMAL_S19"/>
    <property type="match status" value="1"/>
</dbReference>
<reference key="1">
    <citation type="journal article" date="2007" name="PLoS ONE">
        <title>Genome sequencing shows that European isolates of Francisella tularensis subspecies tularensis are almost identical to US laboratory strain Schu S4.</title>
        <authorList>
            <person name="Chaudhuri R.R."/>
            <person name="Ren C.-P."/>
            <person name="Desmond L."/>
            <person name="Vincent G.A."/>
            <person name="Silman N.J."/>
            <person name="Brehm J.K."/>
            <person name="Elmore M.J."/>
            <person name="Hudson M.J."/>
            <person name="Forsman M."/>
            <person name="Isherwood K.E."/>
            <person name="Gurycova D."/>
            <person name="Minton N.P."/>
            <person name="Titball R.W."/>
            <person name="Pallen M.J."/>
            <person name="Vipond R."/>
        </authorList>
    </citation>
    <scope>NUCLEOTIDE SEQUENCE [LARGE SCALE GENOMIC DNA]</scope>
    <source>
        <strain>FSC 198</strain>
    </source>
</reference>
<feature type="chain" id="PRO_0000265363" description="Small ribosomal subunit protein uS19">
    <location>
        <begin position="1"/>
        <end position="92"/>
    </location>
</feature>
<name>RS19_FRAT1</name>